<name>SMRB_SHEB8</name>
<keyword id="KW-0255">Endonuclease</keyword>
<keyword id="KW-0378">Hydrolase</keyword>
<keyword id="KW-0540">Nuclease</keyword>
<keyword id="KW-0694">RNA-binding</keyword>
<keyword id="KW-0699">rRNA-binding</keyword>
<comment type="function">
    <text evidence="1">Acts as a ribosome collision sensor. Detects stalled/collided disomes (pairs of ribosomes where the leading ribosome is stalled and a second ribosome has collided with it) and endonucleolytically cleaves mRNA at the 5' boundary of the stalled ribosome. Stalled/collided disomes form a new interface (primarily via the 30S subunits) that binds SmrB. Cleaved mRNA becomes available for tmRNA ligation, leading to ribosomal subunit dissociation and rescue of stalled ribosomes.</text>
</comment>
<comment type="subunit">
    <text evidence="1">Associates with collided ribosomes, but not with correctly translating polysomes.</text>
</comment>
<comment type="similarity">
    <text evidence="1">Belongs to the SmrB family.</text>
</comment>
<reference key="1">
    <citation type="submission" date="2007-07" db="EMBL/GenBank/DDBJ databases">
        <title>Complete sequence of chromosome of Shewanella baltica OS185.</title>
        <authorList>
            <consortium name="US DOE Joint Genome Institute"/>
            <person name="Copeland A."/>
            <person name="Lucas S."/>
            <person name="Lapidus A."/>
            <person name="Barry K."/>
            <person name="Glavina del Rio T."/>
            <person name="Dalin E."/>
            <person name="Tice H."/>
            <person name="Pitluck S."/>
            <person name="Sims D."/>
            <person name="Brettin T."/>
            <person name="Bruce D."/>
            <person name="Detter J.C."/>
            <person name="Han C."/>
            <person name="Schmutz J."/>
            <person name="Larimer F."/>
            <person name="Land M."/>
            <person name="Hauser L."/>
            <person name="Kyrpides N."/>
            <person name="Mikhailova N."/>
            <person name="Brettar I."/>
            <person name="Rodrigues J."/>
            <person name="Konstantinidis K."/>
            <person name="Tiedje J."/>
            <person name="Richardson P."/>
        </authorList>
    </citation>
    <scope>NUCLEOTIDE SEQUENCE [LARGE SCALE GENOMIC DNA]</scope>
    <source>
        <strain>OS185</strain>
    </source>
</reference>
<proteinExistence type="inferred from homology"/>
<accession>A6WQ16</accession>
<gene>
    <name evidence="1" type="primary">smrB</name>
    <name type="ordered locus">Shew185_2771</name>
</gene>
<evidence type="ECO:0000255" key="1">
    <source>
        <dbReference type="HAMAP-Rule" id="MF_01042"/>
    </source>
</evidence>
<sequence length="176" mass="20171">MNKDDDKEGLAMFSALIDGIKPITQNKRHFRTPLKTKQEIELKEQQLHANSYFSDTYQPLLPVQGPMRWLEEGVDSLELKRLRRGDYQPDLLLDLHGYRQSEAKLELAALIQACVKQQSLCCCIMHGYGSGILKQQVPMWLVQHPMVKAFHQAPKEWGGDAALLVLIDIGEQPHRR</sequence>
<organism>
    <name type="scientific">Shewanella baltica (strain OS185)</name>
    <dbReference type="NCBI Taxonomy" id="402882"/>
    <lineage>
        <taxon>Bacteria</taxon>
        <taxon>Pseudomonadati</taxon>
        <taxon>Pseudomonadota</taxon>
        <taxon>Gammaproteobacteria</taxon>
        <taxon>Alteromonadales</taxon>
        <taxon>Shewanellaceae</taxon>
        <taxon>Shewanella</taxon>
    </lineage>
</organism>
<dbReference type="EC" id="3.1.-.-" evidence="1"/>
<dbReference type="EMBL" id="CP000753">
    <property type="protein sequence ID" value="ABS08905.1"/>
    <property type="molecule type" value="Genomic_DNA"/>
</dbReference>
<dbReference type="RefSeq" id="WP_006082235.1">
    <property type="nucleotide sequence ID" value="NC_009665.1"/>
</dbReference>
<dbReference type="SMR" id="A6WQ16"/>
<dbReference type="KEGG" id="sbm:Shew185_2771"/>
<dbReference type="HOGENOM" id="CLU_055978_4_0_6"/>
<dbReference type="GO" id="GO:0004521">
    <property type="term" value="F:RNA endonuclease activity"/>
    <property type="evidence" value="ECO:0007669"/>
    <property type="project" value="UniProtKB-UniRule"/>
</dbReference>
<dbReference type="GO" id="GO:0019843">
    <property type="term" value="F:rRNA binding"/>
    <property type="evidence" value="ECO:0007669"/>
    <property type="project" value="UniProtKB-UniRule"/>
</dbReference>
<dbReference type="GO" id="GO:0072344">
    <property type="term" value="P:rescue of stalled ribosome"/>
    <property type="evidence" value="ECO:0007669"/>
    <property type="project" value="UniProtKB-UniRule"/>
</dbReference>
<dbReference type="Gene3D" id="3.30.1370.110">
    <property type="match status" value="1"/>
</dbReference>
<dbReference type="HAMAP" id="MF_01042">
    <property type="entry name" value="SmrB"/>
    <property type="match status" value="1"/>
</dbReference>
<dbReference type="InterPro" id="IPR002625">
    <property type="entry name" value="Smr_dom"/>
</dbReference>
<dbReference type="InterPro" id="IPR036063">
    <property type="entry name" value="Smr_dom_sf"/>
</dbReference>
<dbReference type="InterPro" id="IPR022990">
    <property type="entry name" value="SmrB-like"/>
</dbReference>
<dbReference type="NCBIfam" id="NF003432">
    <property type="entry name" value="PRK04946.1"/>
    <property type="match status" value="1"/>
</dbReference>
<dbReference type="PANTHER" id="PTHR35562">
    <property type="entry name" value="DNA ENDONUCLEASE SMRA-RELATED"/>
    <property type="match status" value="1"/>
</dbReference>
<dbReference type="PANTHER" id="PTHR35562:SF1">
    <property type="entry name" value="UPF0115 PROTEIN YFCN"/>
    <property type="match status" value="1"/>
</dbReference>
<dbReference type="Pfam" id="PF01713">
    <property type="entry name" value="Smr"/>
    <property type="match status" value="1"/>
</dbReference>
<dbReference type="SMART" id="SM00463">
    <property type="entry name" value="SMR"/>
    <property type="match status" value="1"/>
</dbReference>
<dbReference type="SUPFAM" id="SSF160443">
    <property type="entry name" value="SMR domain-like"/>
    <property type="match status" value="1"/>
</dbReference>
<dbReference type="PROSITE" id="PS50828">
    <property type="entry name" value="SMR"/>
    <property type="match status" value="1"/>
</dbReference>
<feature type="chain" id="PRO_1000084359" description="Ribosome rescue factor SmrB">
    <location>
        <begin position="1"/>
        <end position="176"/>
    </location>
</feature>
<feature type="domain" description="Smr" evidence="1">
    <location>
        <begin position="93"/>
        <end position="168"/>
    </location>
</feature>
<protein>
    <recommendedName>
        <fullName evidence="1">Ribosome rescue factor SmrB</fullName>
        <ecNumber evidence="1">3.1.-.-</ecNumber>
    </recommendedName>
</protein>